<evidence type="ECO:0000255" key="1">
    <source>
        <dbReference type="HAMAP-Rule" id="MF_01522"/>
    </source>
</evidence>
<accession>Q74LN3</accession>
<proteinExistence type="inferred from homology"/>
<comment type="function">
    <text evidence="1">Transport of potassium into the cell. Likely operates as a K(+):H(+) symporter.</text>
</comment>
<comment type="catalytic activity">
    <reaction evidence="1">
        <text>K(+)(in) + H(+)(in) = K(+)(out) + H(+)(out)</text>
        <dbReference type="Rhea" id="RHEA:28490"/>
        <dbReference type="ChEBI" id="CHEBI:15378"/>
        <dbReference type="ChEBI" id="CHEBI:29103"/>
    </reaction>
    <physiologicalReaction direction="right-to-left" evidence="1">
        <dbReference type="Rhea" id="RHEA:28492"/>
    </physiologicalReaction>
</comment>
<comment type="subcellular location">
    <subcellularLocation>
        <location evidence="1">Cell membrane</location>
        <topology evidence="1">Multi-pass membrane protein</topology>
    </subcellularLocation>
</comment>
<comment type="similarity">
    <text evidence="1">Belongs to the HAK/KUP transporter (TC 2.A.72) family.</text>
</comment>
<dbReference type="EMBL" id="AE017198">
    <property type="protein sequence ID" value="AAS08132.1"/>
    <property type="molecule type" value="Genomic_DNA"/>
</dbReference>
<dbReference type="RefSeq" id="WP_011161368.1">
    <property type="nucleotide sequence ID" value="NC_005362.1"/>
</dbReference>
<dbReference type="KEGG" id="ljo:LJ_0150"/>
<dbReference type="PATRIC" id="fig|257314.6.peg.160"/>
<dbReference type="eggNOG" id="COG3158">
    <property type="taxonomic scope" value="Bacteria"/>
</dbReference>
<dbReference type="HOGENOM" id="CLU_008142_4_1_9"/>
<dbReference type="Proteomes" id="UP000000581">
    <property type="component" value="Chromosome"/>
</dbReference>
<dbReference type="GO" id="GO:0005886">
    <property type="term" value="C:plasma membrane"/>
    <property type="evidence" value="ECO:0007669"/>
    <property type="project" value="UniProtKB-SubCell"/>
</dbReference>
<dbReference type="GO" id="GO:0015079">
    <property type="term" value="F:potassium ion transmembrane transporter activity"/>
    <property type="evidence" value="ECO:0007669"/>
    <property type="project" value="UniProtKB-UniRule"/>
</dbReference>
<dbReference type="GO" id="GO:0015293">
    <property type="term" value="F:symporter activity"/>
    <property type="evidence" value="ECO:0007669"/>
    <property type="project" value="UniProtKB-UniRule"/>
</dbReference>
<dbReference type="HAMAP" id="MF_01522">
    <property type="entry name" value="Kup"/>
    <property type="match status" value="1"/>
</dbReference>
<dbReference type="InterPro" id="IPR003855">
    <property type="entry name" value="K+_transporter"/>
</dbReference>
<dbReference type="InterPro" id="IPR053952">
    <property type="entry name" value="K_trans_C"/>
</dbReference>
<dbReference type="InterPro" id="IPR053951">
    <property type="entry name" value="K_trans_N"/>
</dbReference>
<dbReference type="InterPro" id="IPR023051">
    <property type="entry name" value="Kup"/>
</dbReference>
<dbReference type="PANTHER" id="PTHR30540:SF83">
    <property type="entry name" value="K+ POTASSIUM TRANSPORTER"/>
    <property type="match status" value="1"/>
</dbReference>
<dbReference type="PANTHER" id="PTHR30540">
    <property type="entry name" value="OSMOTIC STRESS POTASSIUM TRANSPORTER"/>
    <property type="match status" value="1"/>
</dbReference>
<dbReference type="Pfam" id="PF02705">
    <property type="entry name" value="K_trans"/>
    <property type="match status" value="1"/>
</dbReference>
<dbReference type="Pfam" id="PF22776">
    <property type="entry name" value="K_trans_C"/>
    <property type="match status" value="1"/>
</dbReference>
<reference key="1">
    <citation type="journal article" date="2004" name="Proc. Natl. Acad. Sci. U.S.A.">
        <title>The genome sequence of the probiotic intestinal bacterium Lactobacillus johnsonii NCC 533.</title>
        <authorList>
            <person name="Pridmore R.D."/>
            <person name="Berger B."/>
            <person name="Desiere F."/>
            <person name="Vilanova D."/>
            <person name="Barretto C."/>
            <person name="Pittet A.-C."/>
            <person name="Zwahlen M.-C."/>
            <person name="Rouvet M."/>
            <person name="Altermann E."/>
            <person name="Barrangou R."/>
            <person name="Mollet B."/>
            <person name="Mercenier A."/>
            <person name="Klaenhammer T."/>
            <person name="Arigoni F."/>
            <person name="Schell M.A."/>
        </authorList>
    </citation>
    <scope>NUCLEOTIDE SEQUENCE [LARGE SCALE GENOMIC DNA]</scope>
    <source>
        <strain>CNCM I-1225 / La1 / NCC 533</strain>
    </source>
</reference>
<feature type="chain" id="PRO_0000209022" description="Probable potassium transport system protein Kup 1">
    <location>
        <begin position="1"/>
        <end position="683"/>
    </location>
</feature>
<feature type="transmembrane region" description="Helical" evidence="1">
    <location>
        <begin position="13"/>
        <end position="33"/>
    </location>
</feature>
<feature type="transmembrane region" description="Helical" evidence="1">
    <location>
        <begin position="55"/>
        <end position="75"/>
    </location>
</feature>
<feature type="transmembrane region" description="Helical" evidence="1">
    <location>
        <begin position="98"/>
        <end position="118"/>
    </location>
</feature>
<feature type="transmembrane region" description="Helical" evidence="1">
    <location>
        <begin position="139"/>
        <end position="159"/>
    </location>
</feature>
<feature type="transmembrane region" description="Helical" evidence="1">
    <location>
        <begin position="168"/>
        <end position="188"/>
    </location>
</feature>
<feature type="transmembrane region" description="Helical" evidence="1">
    <location>
        <begin position="218"/>
        <end position="238"/>
    </location>
</feature>
<feature type="transmembrane region" description="Helical" evidence="1">
    <location>
        <begin position="251"/>
        <end position="271"/>
    </location>
</feature>
<feature type="transmembrane region" description="Helical" evidence="1">
    <location>
        <begin position="296"/>
        <end position="316"/>
    </location>
</feature>
<feature type="transmembrane region" description="Helical" evidence="1">
    <location>
        <begin position="345"/>
        <end position="365"/>
    </location>
</feature>
<feature type="transmembrane region" description="Helical" evidence="1">
    <location>
        <begin position="376"/>
        <end position="396"/>
    </location>
</feature>
<feature type="transmembrane region" description="Helical" evidence="1">
    <location>
        <begin position="401"/>
        <end position="421"/>
    </location>
</feature>
<feature type="transmembrane region" description="Helical" evidence="1">
    <location>
        <begin position="426"/>
        <end position="446"/>
    </location>
</feature>
<name>KUP1_LACJO</name>
<organism>
    <name type="scientific">Lactobacillus johnsonii (strain CNCM I-12250 / La1 / NCC 533)</name>
    <dbReference type="NCBI Taxonomy" id="257314"/>
    <lineage>
        <taxon>Bacteria</taxon>
        <taxon>Bacillati</taxon>
        <taxon>Bacillota</taxon>
        <taxon>Bacilli</taxon>
        <taxon>Lactobacillales</taxon>
        <taxon>Lactobacillaceae</taxon>
        <taxon>Lactobacillus</taxon>
    </lineage>
</organism>
<gene>
    <name evidence="1" type="primary">kup1</name>
    <name type="ordered locus">LJ_0150</name>
</gene>
<protein>
    <recommendedName>
        <fullName evidence="1">Probable potassium transport system protein Kup 1</fullName>
    </recommendedName>
</protein>
<sequence>MNEKTRKNISAAGLLIAIGIVYGDIGTSPLYVMKSIVAGNGGIANVNRDFIVGSISLVLWTVTLLTTLQTVFIALKATNHGEGGIFALYTLVRKRAKWLVLPALIGGAAILADGTLTPAVTVTTAIEGLKGIEFGHGNVPVSTQGTVIAITVVILLLLFSIQRMGTSIIGKAFGPIMFIWFTFLGVIGLMNMMGDLSILQALNPYYAIKLLFSPYNKAGIFILGSIFLATTGAEALYSDVGHVGKGNIIGSWPYVFVCLSLNYFGQGVWILNNPNYNAGNGDFNPFFEIIPQNIRLAAIVLATIAAVIASQALITGSFTLVAEASGLKFLPRMNIMYPSTKKGQIYIPSVNKMICAATIAIVLFFQTSAHMEAAYGLSITISMLMTTILLYEWLAMKGVHTIWNWLFLIFFGFLDVMFMLASLSKFMHGGYVSLVIAGFIGIIMYVWYYGNKIRDKRESRNAYVRLDEYVDMLTNLSHDEDYPTFATNLVYMAKVKYNKFIKREILYSILDKRPKRARAYWFVTVNVTNEPFTAEYAVNTYGTKNVINVQLFLGFKQQTSVNVYLRQIVHDLIADGTIESQPQEYTTTPGRDVGDFSFVIVNDVISPQTQLRSYEKFLVEARVWLQNLSSNPASWFGLDYADTVIERVPLILGNQRRQHITRIPPKKFEDIKKKLQAEGELKE</sequence>
<keyword id="KW-1003">Cell membrane</keyword>
<keyword id="KW-0406">Ion transport</keyword>
<keyword id="KW-0472">Membrane</keyword>
<keyword id="KW-0630">Potassium</keyword>
<keyword id="KW-0633">Potassium transport</keyword>
<keyword id="KW-0769">Symport</keyword>
<keyword id="KW-0812">Transmembrane</keyword>
<keyword id="KW-1133">Transmembrane helix</keyword>
<keyword id="KW-0813">Transport</keyword>